<keyword id="KW-0025">Alternative splicing</keyword>
<keyword id="KW-0966">Cell projection</keyword>
<keyword id="KW-0969">Cilium</keyword>
<keyword id="KW-0175">Coiled coil</keyword>
<keyword id="KW-0963">Cytoplasm</keyword>
<keyword id="KW-0206">Cytoskeleton</keyword>
<keyword id="KW-0282">Flagellum</keyword>
<keyword id="KW-1185">Reference proteome</keyword>
<reference key="1">
    <citation type="journal article" date="2005" name="BMC Genomics">
        <title>Characterization of 954 bovine full-CDS cDNA sequences.</title>
        <authorList>
            <person name="Harhay G.P."/>
            <person name="Sonstegard T.S."/>
            <person name="Keele J.W."/>
            <person name="Heaton M.P."/>
            <person name="Clawson M.L."/>
            <person name="Snelling W.M."/>
            <person name="Wiedmann R.T."/>
            <person name="Van Tassell C.P."/>
            <person name="Smith T.P.L."/>
        </authorList>
    </citation>
    <scope>NUCLEOTIDE SEQUENCE [LARGE SCALE MRNA] (ISOFORM 2)</scope>
</reference>
<reference key="2">
    <citation type="submission" date="2005-11" db="EMBL/GenBank/DDBJ databases">
        <authorList>
            <consortium name="NIH - Mammalian Gene Collection (MGC) project"/>
        </authorList>
    </citation>
    <scope>NUCLEOTIDE SEQUENCE [LARGE SCALE MRNA] (ISOFORM 1)</scope>
    <source>
        <strain>Crossbred X Angus</strain>
        <tissue>Liver</tissue>
    </source>
</reference>
<organism>
    <name type="scientific">Bos taurus</name>
    <name type="common">Bovine</name>
    <dbReference type="NCBI Taxonomy" id="9913"/>
    <lineage>
        <taxon>Eukaryota</taxon>
        <taxon>Metazoa</taxon>
        <taxon>Chordata</taxon>
        <taxon>Craniata</taxon>
        <taxon>Vertebrata</taxon>
        <taxon>Euteleostomi</taxon>
        <taxon>Mammalia</taxon>
        <taxon>Eutheria</taxon>
        <taxon>Laurasiatheria</taxon>
        <taxon>Artiodactyla</taxon>
        <taxon>Ruminantia</taxon>
        <taxon>Pecora</taxon>
        <taxon>Bovidae</taxon>
        <taxon>Bovinae</taxon>
        <taxon>Bos</taxon>
    </lineage>
</organism>
<proteinExistence type="evidence at transcript level"/>
<protein>
    <recommendedName>
        <fullName>Dynein regulatory complex protein 1</fullName>
    </recommendedName>
    <alternativeName>
        <fullName>Coiled-coil domain-containing protein 164</fullName>
    </alternativeName>
</protein>
<evidence type="ECO:0000250" key="1">
    <source>
        <dbReference type="UniProtKB" id="P0DL09"/>
    </source>
</evidence>
<evidence type="ECO:0000250" key="2">
    <source>
        <dbReference type="UniProtKB" id="Q96MC2"/>
    </source>
</evidence>
<evidence type="ECO:0000255" key="3"/>
<evidence type="ECO:0000256" key="4">
    <source>
        <dbReference type="SAM" id="MobiDB-lite"/>
    </source>
</evidence>
<evidence type="ECO:0000303" key="5">
    <source>
    </source>
</evidence>
<evidence type="ECO:0000305" key="6"/>
<feature type="chain" id="PRO_0000277880" description="Dynein regulatory complex protein 1">
    <location>
        <begin position="1"/>
        <end position="712"/>
    </location>
</feature>
<feature type="region of interest" description="Disordered" evidence="4">
    <location>
        <begin position="1"/>
        <end position="34"/>
    </location>
</feature>
<feature type="region of interest" description="Disordered" evidence="4">
    <location>
        <begin position="557"/>
        <end position="591"/>
    </location>
</feature>
<feature type="coiled-coil region" evidence="3">
    <location>
        <begin position="100"/>
        <end position="388"/>
    </location>
</feature>
<feature type="coiled-coil region" evidence="3">
    <location>
        <begin position="663"/>
        <end position="698"/>
    </location>
</feature>
<feature type="compositionally biased region" description="Basic and acidic residues" evidence="4">
    <location>
        <begin position="565"/>
        <end position="585"/>
    </location>
</feature>
<feature type="splice variant" id="VSP_023121" description="In isoform 2." evidence="5">
    <location>
        <begin position="227"/>
        <end position="296"/>
    </location>
</feature>
<feature type="sequence conflict" description="In Ref. 1; ABH06342." evidence="6" ref="1">
    <original>L</original>
    <variation>P</variation>
    <location>
        <position position="344"/>
    </location>
</feature>
<comment type="function">
    <text evidence="1 2">Component of the nexin-dynein regulatory complex (N-DRC) a key regulator of ciliary/flagellar motility which maintains the alignment and integrity of the distal axoneme and regulates microtubule sliding in motile axonemes. Plays a critical role in the assembly of N-DRC and also stabilizes the assembly of multiple inner dynein arms and radial spokes. Coassembles with CCDC65/DRC2 to form a central scaffold needed for assembly of the N-DRC and its attachment to the outer doublet microtubules.</text>
</comment>
<comment type="subunit">
    <text evidence="1 2">Component of the nexin-dynein regulatory complex (N-DRC). Interacts with CCDC65/DRC2, DRC3, GAS8/DRC4 and TCTE1/DRC5.</text>
</comment>
<comment type="subcellular location">
    <subcellularLocation>
        <location evidence="1">Cytoplasm</location>
        <location evidence="1">Cytoskeleton</location>
        <location evidence="1">Cilium axoneme</location>
    </subcellularLocation>
    <subcellularLocation>
        <location evidence="1">Cytoplasm</location>
        <location evidence="1">Cytoskeleton</location>
        <location evidence="1">Flagellum axoneme</location>
    </subcellularLocation>
</comment>
<comment type="alternative products">
    <event type="alternative splicing"/>
    <isoform>
        <id>Q32KY1-1</id>
        <name>1</name>
        <sequence type="displayed"/>
    </isoform>
    <isoform>
        <id>Q32KY1-2</id>
        <name>2</name>
        <sequence type="described" ref="VSP_023121"/>
    </isoform>
</comment>
<comment type="similarity">
    <text evidence="6">Belongs to the DRC1 family.</text>
</comment>
<sequence length="712" mass="84070">MNPPGSLGVLEEKEEEHLAPPILGPSIHSDNPQERIQARRLRIAARLEARRREALGEYLDGKKESEEDQSKSYKQKEESRLKLAKLLLCGTELVTNIQVAADIREIHRRVEEEEIKRQRLEKLENEVKTSQDKFDEITVKWEEGKQRRIPQELWEMLNAQQVHCAGLIEDKNKLISELQQELKMKDDQYVKDLKKQSDDICLLLERMEEQVKNVMKTFRQELQNIEKAFEVERQELLTSNKKKWERALQAHNAKELEYLMNRIKKVEDYEKQLNKQRIWDCEEYNTIKIKLEQDVQILEQQLQQMKATYQLNQEKLEYNFQVLKKRDEESTVIKSQQKRKINRLHDVLNNLRSKYNKQVKQFQEENQSLTSDYKRLVLQFKELQKAMRHFALIDDKRFREIWLMNEEEAKDLINRAFDVDRIISTHHLGLPWMAPDFWFLKNVGPISQQQQKSATQILEEVLMEAEKEGADEDSSESETYLDLPKQVSARTTRKILMLLCDESGFLIESKLLSLLLPLEKNECYLLRLDAVFSALGIENEDDLYKLVNFFLKYQTHHSPSSQEPLDLRAEKERSLVDGKSQEKEPPPSPKLIHPNDVLKILEAFVMSLRKPRDFWVPVKLLKAVRDDSKDSEYWEALTTVIPATTLNLWDALYTALEKYHLVLTQRAELLIENSSLERQNTELQQLLQQYLDTKINSELQVPPTQVFRVPTK</sequence>
<accession>Q32KY1</accession>
<accession>Q0V7L5</accession>
<gene>
    <name type="primary">DRC1</name>
    <name type="synonym">CCDC164</name>
</gene>
<dbReference type="EMBL" id="BT026555">
    <property type="protein sequence ID" value="ABH06342.1"/>
    <property type="molecule type" value="mRNA"/>
</dbReference>
<dbReference type="EMBL" id="BC109861">
    <property type="protein sequence ID" value="AAI09862.1"/>
    <property type="molecule type" value="mRNA"/>
</dbReference>
<dbReference type="RefSeq" id="NP_001032680.1">
    <molecule id="Q32KY1-1"/>
    <property type="nucleotide sequence ID" value="NM_001037591.1"/>
</dbReference>
<dbReference type="EMDB" id="EMD-50664"/>
<dbReference type="SMR" id="Q32KY1"/>
<dbReference type="FunCoup" id="Q32KY1">
    <property type="interactions" value="149"/>
</dbReference>
<dbReference type="STRING" id="9913.ENSBTAP00000012714"/>
<dbReference type="PaxDb" id="9913-ENSBTAP00000012714"/>
<dbReference type="Ensembl" id="ENSBTAT00000044033.3">
    <molecule id="Q32KY1-2"/>
    <property type="protein sequence ID" value="ENSBTAP00000041552.2"/>
    <property type="gene ID" value="ENSBTAG00000009649.7"/>
</dbReference>
<dbReference type="GeneID" id="509524"/>
<dbReference type="KEGG" id="bta:509524"/>
<dbReference type="CTD" id="92749"/>
<dbReference type="VEuPathDB" id="HostDB:ENSBTAG00000009649"/>
<dbReference type="eggNOG" id="ENOG502QQ2B">
    <property type="taxonomic scope" value="Eukaryota"/>
</dbReference>
<dbReference type="GeneTree" id="ENSGT00940000153804"/>
<dbReference type="HOGENOM" id="CLU_012489_1_0_1"/>
<dbReference type="InParanoid" id="Q32KY1"/>
<dbReference type="OMA" id="LDFMMAR"/>
<dbReference type="OrthoDB" id="10260459at2759"/>
<dbReference type="TreeFam" id="TF324985"/>
<dbReference type="Proteomes" id="UP000009136">
    <property type="component" value="Chromosome 11"/>
</dbReference>
<dbReference type="Bgee" id="ENSBTAG00000009649">
    <property type="expression patterns" value="Expressed in oviduct epithelium and 74 other cell types or tissues"/>
</dbReference>
<dbReference type="GO" id="GO:0005858">
    <property type="term" value="C:axonemal dynein complex"/>
    <property type="evidence" value="ECO:0007669"/>
    <property type="project" value="InterPro"/>
</dbReference>
<dbReference type="GO" id="GO:0005930">
    <property type="term" value="C:axoneme"/>
    <property type="evidence" value="ECO:0000314"/>
    <property type="project" value="UniProtKB"/>
</dbReference>
<dbReference type="GO" id="GO:0031514">
    <property type="term" value="C:motile cilium"/>
    <property type="evidence" value="ECO:0007669"/>
    <property type="project" value="UniProtKB-KW"/>
</dbReference>
<dbReference type="GO" id="GO:0070286">
    <property type="term" value="P:axonemal dynein complex assembly"/>
    <property type="evidence" value="ECO:0000315"/>
    <property type="project" value="UniProtKB"/>
</dbReference>
<dbReference type="GO" id="GO:0060285">
    <property type="term" value="P:cilium-dependent cell motility"/>
    <property type="evidence" value="ECO:0000315"/>
    <property type="project" value="UniProtKB"/>
</dbReference>
<dbReference type="GO" id="GO:0003352">
    <property type="term" value="P:regulation of cilium movement"/>
    <property type="evidence" value="ECO:0000318"/>
    <property type="project" value="GO_Central"/>
</dbReference>
<dbReference type="InterPro" id="IPR039505">
    <property type="entry name" value="DRC1/2_N"/>
</dbReference>
<dbReference type="InterPro" id="IPR039750">
    <property type="entry name" value="DRC1/DRC2"/>
</dbReference>
<dbReference type="InterPro" id="IPR029440">
    <property type="entry name" value="DRC1_C"/>
</dbReference>
<dbReference type="PANTHER" id="PTHR21625:SF1">
    <property type="entry name" value="DYNEIN REGULATORY COMPLEX PROTEIN 1"/>
    <property type="match status" value="1"/>
</dbReference>
<dbReference type="PANTHER" id="PTHR21625">
    <property type="entry name" value="NYD-SP28 PROTEIN"/>
    <property type="match status" value="1"/>
</dbReference>
<dbReference type="Pfam" id="PF14772">
    <property type="entry name" value="NYD-SP28"/>
    <property type="match status" value="1"/>
</dbReference>
<dbReference type="Pfam" id="PF14775">
    <property type="entry name" value="NYD-SP28_assoc"/>
    <property type="match status" value="1"/>
</dbReference>
<name>DRC1_BOVIN</name>